<gene>
    <name evidence="1" type="primary">rplP</name>
    <name type="ordered locus">MW2162</name>
</gene>
<comment type="function">
    <text evidence="1">Binds 23S rRNA and is also seen to make contacts with the A and possibly P site tRNAs.</text>
</comment>
<comment type="subunit">
    <text evidence="1">Part of the 50S ribosomal subunit.</text>
</comment>
<comment type="similarity">
    <text evidence="1">Belongs to the universal ribosomal protein uL16 family.</text>
</comment>
<evidence type="ECO:0000255" key="1">
    <source>
        <dbReference type="HAMAP-Rule" id="MF_01342"/>
    </source>
</evidence>
<evidence type="ECO:0000256" key="2">
    <source>
        <dbReference type="SAM" id="MobiDB-lite"/>
    </source>
</evidence>
<evidence type="ECO:0000305" key="3"/>
<dbReference type="EMBL" id="BA000033">
    <property type="protein sequence ID" value="BAB96027.1"/>
    <property type="molecule type" value="Genomic_DNA"/>
</dbReference>
<dbReference type="RefSeq" id="WP_000926310.1">
    <property type="nucleotide sequence ID" value="NC_003923.1"/>
</dbReference>
<dbReference type="PDB" id="8Y36">
    <property type="method" value="EM"/>
    <property type="resolution" value="2.65 A"/>
    <property type="chains" value="K=1-137"/>
</dbReference>
<dbReference type="PDB" id="8Y37">
    <property type="method" value="EM"/>
    <property type="resolution" value="2.53 A"/>
    <property type="chains" value="K=1-137"/>
</dbReference>
<dbReference type="PDB" id="8Y38">
    <property type="method" value="EM"/>
    <property type="resolution" value="2.58 A"/>
    <property type="chains" value="K=1-137"/>
</dbReference>
<dbReference type="PDB" id="8Y39">
    <property type="method" value="EM"/>
    <property type="resolution" value="3.60 A"/>
    <property type="chains" value="K=1-137"/>
</dbReference>
<dbReference type="PDBsum" id="8Y36"/>
<dbReference type="PDBsum" id="8Y37"/>
<dbReference type="PDBsum" id="8Y38"/>
<dbReference type="PDBsum" id="8Y39"/>
<dbReference type="EMDB" id="EMD-38873"/>
<dbReference type="EMDB" id="EMD-38874"/>
<dbReference type="EMDB" id="EMD-38875"/>
<dbReference type="EMDB" id="EMD-38876"/>
<dbReference type="SMR" id="Q7A080"/>
<dbReference type="GeneID" id="98346555"/>
<dbReference type="KEGG" id="sam:MW2162"/>
<dbReference type="HOGENOM" id="CLU_078858_2_1_9"/>
<dbReference type="GO" id="GO:0022625">
    <property type="term" value="C:cytosolic large ribosomal subunit"/>
    <property type="evidence" value="ECO:0007669"/>
    <property type="project" value="TreeGrafter"/>
</dbReference>
<dbReference type="GO" id="GO:0019843">
    <property type="term" value="F:rRNA binding"/>
    <property type="evidence" value="ECO:0007669"/>
    <property type="project" value="UniProtKB-UniRule"/>
</dbReference>
<dbReference type="GO" id="GO:0003735">
    <property type="term" value="F:structural constituent of ribosome"/>
    <property type="evidence" value="ECO:0007669"/>
    <property type="project" value="InterPro"/>
</dbReference>
<dbReference type="GO" id="GO:0000049">
    <property type="term" value="F:tRNA binding"/>
    <property type="evidence" value="ECO:0007669"/>
    <property type="project" value="UniProtKB-KW"/>
</dbReference>
<dbReference type="GO" id="GO:0006412">
    <property type="term" value="P:translation"/>
    <property type="evidence" value="ECO:0007669"/>
    <property type="project" value="UniProtKB-UniRule"/>
</dbReference>
<dbReference type="CDD" id="cd01433">
    <property type="entry name" value="Ribosomal_L16_L10e"/>
    <property type="match status" value="1"/>
</dbReference>
<dbReference type="FunFam" id="3.90.1170.10:FF:000001">
    <property type="entry name" value="50S ribosomal protein L16"/>
    <property type="match status" value="1"/>
</dbReference>
<dbReference type="Gene3D" id="3.90.1170.10">
    <property type="entry name" value="Ribosomal protein L10e/L16"/>
    <property type="match status" value="1"/>
</dbReference>
<dbReference type="HAMAP" id="MF_01342">
    <property type="entry name" value="Ribosomal_uL16"/>
    <property type="match status" value="1"/>
</dbReference>
<dbReference type="InterPro" id="IPR047873">
    <property type="entry name" value="Ribosomal_uL16"/>
</dbReference>
<dbReference type="InterPro" id="IPR000114">
    <property type="entry name" value="Ribosomal_uL16_bact-type"/>
</dbReference>
<dbReference type="InterPro" id="IPR020798">
    <property type="entry name" value="Ribosomal_uL16_CS"/>
</dbReference>
<dbReference type="InterPro" id="IPR016180">
    <property type="entry name" value="Ribosomal_uL16_dom"/>
</dbReference>
<dbReference type="InterPro" id="IPR036920">
    <property type="entry name" value="Ribosomal_uL16_sf"/>
</dbReference>
<dbReference type="NCBIfam" id="TIGR01164">
    <property type="entry name" value="rplP_bact"/>
    <property type="match status" value="1"/>
</dbReference>
<dbReference type="PANTHER" id="PTHR12220">
    <property type="entry name" value="50S/60S RIBOSOMAL PROTEIN L16"/>
    <property type="match status" value="1"/>
</dbReference>
<dbReference type="PANTHER" id="PTHR12220:SF13">
    <property type="entry name" value="LARGE RIBOSOMAL SUBUNIT PROTEIN UL16M"/>
    <property type="match status" value="1"/>
</dbReference>
<dbReference type="Pfam" id="PF00252">
    <property type="entry name" value="Ribosomal_L16"/>
    <property type="match status" value="1"/>
</dbReference>
<dbReference type="PRINTS" id="PR00060">
    <property type="entry name" value="RIBOSOMALL16"/>
</dbReference>
<dbReference type="SUPFAM" id="SSF54686">
    <property type="entry name" value="Ribosomal protein L16p/L10e"/>
    <property type="match status" value="1"/>
</dbReference>
<dbReference type="PROSITE" id="PS00586">
    <property type="entry name" value="RIBOSOMAL_L16_1"/>
    <property type="match status" value="1"/>
</dbReference>
<dbReference type="PROSITE" id="PS00701">
    <property type="entry name" value="RIBOSOMAL_L16_2"/>
    <property type="match status" value="1"/>
</dbReference>
<accession>Q7A080</accession>
<keyword id="KW-0002">3D-structure</keyword>
<keyword id="KW-0687">Ribonucleoprotein</keyword>
<keyword id="KW-0689">Ribosomal protein</keyword>
<keyword id="KW-0694">RNA-binding</keyword>
<keyword id="KW-0699">rRNA-binding</keyword>
<keyword id="KW-0820">tRNA-binding</keyword>
<proteinExistence type="evidence at protein level"/>
<sequence length="144" mass="16242">MLLPKRVKYRRQHRPKTTGRSKGGNYVTFGEFGLQATTTSWITSRQIESARIAMTRYMKRGGKVWIKIFPHTPYTKKPLEVRMGAGKGAVEGWIAVVKPGRILFEVAGVSEEVAREALRLASHKLPVKTKFVKREELGGETNES</sequence>
<feature type="chain" id="PRO_0000062207" description="Large ribosomal subunit protein uL16">
    <location>
        <begin position="1"/>
        <end position="144"/>
    </location>
</feature>
<feature type="region of interest" description="Disordered" evidence="2">
    <location>
        <begin position="1"/>
        <end position="23"/>
    </location>
</feature>
<feature type="compositionally biased region" description="Basic residues" evidence="2">
    <location>
        <begin position="1"/>
        <end position="19"/>
    </location>
</feature>
<name>RL16_STAAW</name>
<protein>
    <recommendedName>
        <fullName evidence="1">Large ribosomal subunit protein uL16</fullName>
    </recommendedName>
    <alternativeName>
        <fullName evidence="3">50S ribosomal protein L16</fullName>
    </alternativeName>
</protein>
<organism>
    <name type="scientific">Staphylococcus aureus (strain MW2)</name>
    <dbReference type="NCBI Taxonomy" id="196620"/>
    <lineage>
        <taxon>Bacteria</taxon>
        <taxon>Bacillati</taxon>
        <taxon>Bacillota</taxon>
        <taxon>Bacilli</taxon>
        <taxon>Bacillales</taxon>
        <taxon>Staphylococcaceae</taxon>
        <taxon>Staphylococcus</taxon>
    </lineage>
</organism>
<reference key="1">
    <citation type="journal article" date="2002" name="Lancet">
        <title>Genome and virulence determinants of high virulence community-acquired MRSA.</title>
        <authorList>
            <person name="Baba T."/>
            <person name="Takeuchi F."/>
            <person name="Kuroda M."/>
            <person name="Yuzawa H."/>
            <person name="Aoki K."/>
            <person name="Oguchi A."/>
            <person name="Nagai Y."/>
            <person name="Iwama N."/>
            <person name="Asano K."/>
            <person name="Naimi T."/>
            <person name="Kuroda H."/>
            <person name="Cui L."/>
            <person name="Yamamoto K."/>
            <person name="Hiramatsu K."/>
        </authorList>
    </citation>
    <scope>NUCLEOTIDE SEQUENCE [LARGE SCALE GENOMIC DNA]</scope>
    <source>
        <strain>MW2</strain>
    </source>
</reference>